<protein>
    <recommendedName>
        <fullName evidence="1">Holliday junction branch migration complex subunit RuvA</fullName>
    </recommendedName>
</protein>
<dbReference type="EMBL" id="CP000702">
    <property type="protein sequence ID" value="ABQ46779.1"/>
    <property type="molecule type" value="Genomic_DNA"/>
</dbReference>
<dbReference type="RefSeq" id="WP_011943355.1">
    <property type="nucleotide sequence ID" value="NC_009486.1"/>
</dbReference>
<dbReference type="SMR" id="A5IKQ6"/>
<dbReference type="STRING" id="390874.Tpet_0760"/>
<dbReference type="KEGG" id="tpt:Tpet_0760"/>
<dbReference type="eggNOG" id="COG0632">
    <property type="taxonomic scope" value="Bacteria"/>
</dbReference>
<dbReference type="HOGENOM" id="CLU_087936_3_0_0"/>
<dbReference type="Proteomes" id="UP000006558">
    <property type="component" value="Chromosome"/>
</dbReference>
<dbReference type="GO" id="GO:0005737">
    <property type="term" value="C:cytoplasm"/>
    <property type="evidence" value="ECO:0007669"/>
    <property type="project" value="UniProtKB-SubCell"/>
</dbReference>
<dbReference type="GO" id="GO:0009379">
    <property type="term" value="C:Holliday junction helicase complex"/>
    <property type="evidence" value="ECO:0007669"/>
    <property type="project" value="InterPro"/>
</dbReference>
<dbReference type="GO" id="GO:0048476">
    <property type="term" value="C:Holliday junction resolvase complex"/>
    <property type="evidence" value="ECO:0007669"/>
    <property type="project" value="UniProtKB-UniRule"/>
</dbReference>
<dbReference type="GO" id="GO:0005524">
    <property type="term" value="F:ATP binding"/>
    <property type="evidence" value="ECO:0007669"/>
    <property type="project" value="InterPro"/>
</dbReference>
<dbReference type="GO" id="GO:0000400">
    <property type="term" value="F:four-way junction DNA binding"/>
    <property type="evidence" value="ECO:0007669"/>
    <property type="project" value="UniProtKB-UniRule"/>
</dbReference>
<dbReference type="GO" id="GO:0009378">
    <property type="term" value="F:four-way junction helicase activity"/>
    <property type="evidence" value="ECO:0007669"/>
    <property type="project" value="InterPro"/>
</dbReference>
<dbReference type="GO" id="GO:0006310">
    <property type="term" value="P:DNA recombination"/>
    <property type="evidence" value="ECO:0007669"/>
    <property type="project" value="UniProtKB-UniRule"/>
</dbReference>
<dbReference type="GO" id="GO:0006281">
    <property type="term" value="P:DNA repair"/>
    <property type="evidence" value="ECO:0007669"/>
    <property type="project" value="UniProtKB-UniRule"/>
</dbReference>
<dbReference type="CDD" id="cd14332">
    <property type="entry name" value="UBA_RuvA_C"/>
    <property type="match status" value="1"/>
</dbReference>
<dbReference type="Gene3D" id="1.10.150.20">
    <property type="entry name" value="5' to 3' exonuclease, C-terminal subdomain"/>
    <property type="match status" value="1"/>
</dbReference>
<dbReference type="Gene3D" id="1.10.8.10">
    <property type="entry name" value="DNA helicase RuvA subunit, C-terminal domain"/>
    <property type="match status" value="1"/>
</dbReference>
<dbReference type="Gene3D" id="2.40.50.140">
    <property type="entry name" value="Nucleic acid-binding proteins"/>
    <property type="match status" value="1"/>
</dbReference>
<dbReference type="HAMAP" id="MF_00031">
    <property type="entry name" value="DNA_HJ_migration_RuvA"/>
    <property type="match status" value="1"/>
</dbReference>
<dbReference type="InterPro" id="IPR013849">
    <property type="entry name" value="DNA_helicase_Holl-junc_RuvA_I"/>
</dbReference>
<dbReference type="InterPro" id="IPR003583">
    <property type="entry name" value="Hlx-hairpin-Hlx_DNA-bd_motif"/>
</dbReference>
<dbReference type="InterPro" id="IPR012340">
    <property type="entry name" value="NA-bd_OB-fold"/>
</dbReference>
<dbReference type="InterPro" id="IPR000085">
    <property type="entry name" value="RuvA"/>
</dbReference>
<dbReference type="InterPro" id="IPR010994">
    <property type="entry name" value="RuvA_2-like"/>
</dbReference>
<dbReference type="InterPro" id="IPR011114">
    <property type="entry name" value="RuvA_C"/>
</dbReference>
<dbReference type="InterPro" id="IPR036267">
    <property type="entry name" value="RuvA_C_sf"/>
</dbReference>
<dbReference type="NCBIfam" id="TIGR00084">
    <property type="entry name" value="ruvA"/>
    <property type="match status" value="1"/>
</dbReference>
<dbReference type="Pfam" id="PF14520">
    <property type="entry name" value="HHH_5"/>
    <property type="match status" value="1"/>
</dbReference>
<dbReference type="Pfam" id="PF07499">
    <property type="entry name" value="RuvA_C"/>
    <property type="match status" value="1"/>
</dbReference>
<dbReference type="Pfam" id="PF01330">
    <property type="entry name" value="RuvA_N"/>
    <property type="match status" value="1"/>
</dbReference>
<dbReference type="SMART" id="SM00278">
    <property type="entry name" value="HhH1"/>
    <property type="match status" value="2"/>
</dbReference>
<dbReference type="SUPFAM" id="SSF46929">
    <property type="entry name" value="DNA helicase RuvA subunit, C-terminal domain"/>
    <property type="match status" value="1"/>
</dbReference>
<dbReference type="SUPFAM" id="SSF50249">
    <property type="entry name" value="Nucleic acid-binding proteins"/>
    <property type="match status" value="1"/>
</dbReference>
<dbReference type="SUPFAM" id="SSF47781">
    <property type="entry name" value="RuvA domain 2-like"/>
    <property type="match status" value="1"/>
</dbReference>
<name>RUVA_THEP1</name>
<accession>A5IKQ6</accession>
<gene>
    <name evidence="1" type="primary">ruvA</name>
    <name type="ordered locus">Tpet_0760</name>
</gene>
<organism>
    <name type="scientific">Thermotoga petrophila (strain ATCC BAA-488 / DSM 13995 / JCM 10881 / RKU-1)</name>
    <dbReference type="NCBI Taxonomy" id="390874"/>
    <lineage>
        <taxon>Bacteria</taxon>
        <taxon>Thermotogati</taxon>
        <taxon>Thermotogota</taxon>
        <taxon>Thermotogae</taxon>
        <taxon>Thermotogales</taxon>
        <taxon>Thermotogaceae</taxon>
        <taxon>Thermotoga</taxon>
    </lineage>
</organism>
<feature type="chain" id="PRO_1000002589" description="Holliday junction branch migration complex subunit RuvA">
    <location>
        <begin position="1"/>
        <end position="188"/>
    </location>
</feature>
<feature type="region of interest" description="Domain I" evidence="1">
    <location>
        <begin position="1"/>
        <end position="64"/>
    </location>
</feature>
<feature type="region of interest" description="Domain II" evidence="1">
    <location>
        <begin position="65"/>
        <end position="143"/>
    </location>
</feature>
<feature type="region of interest" description="Domain III" evidence="1">
    <location>
        <begin position="143"/>
        <end position="188"/>
    </location>
</feature>
<feature type="region of interest" description="Flexible linker" evidence="1">
    <location>
        <position position="143"/>
    </location>
</feature>
<comment type="function">
    <text evidence="1">The RuvA-RuvB-RuvC complex processes Holliday junction (HJ) DNA during genetic recombination and DNA repair, while the RuvA-RuvB complex plays an important role in the rescue of blocked DNA replication forks via replication fork reversal (RFR). RuvA specifically binds to HJ cruciform DNA, conferring on it an open structure. The RuvB hexamer acts as an ATP-dependent pump, pulling dsDNA into and through the RuvAB complex. HJ branch migration allows RuvC to scan DNA until it finds its consensus sequence, where it cleaves and resolves the cruciform DNA.</text>
</comment>
<comment type="subunit">
    <text evidence="1">Homotetramer. Forms an RuvA(8)-RuvB(12)-Holliday junction (HJ) complex. HJ DNA is sandwiched between 2 RuvA tetramers; dsDNA enters through RuvA and exits via RuvB. An RuvB hexamer assembles on each DNA strand where it exits the tetramer. Each RuvB hexamer is contacted by two RuvA subunits (via domain III) on 2 adjacent RuvB subunits; this complex drives branch migration. In the full resolvosome a probable DNA-RuvA(4)-RuvB(12)-RuvC(2) complex forms which resolves the HJ.</text>
</comment>
<comment type="subcellular location">
    <subcellularLocation>
        <location evidence="1">Cytoplasm</location>
    </subcellularLocation>
</comment>
<comment type="domain">
    <text evidence="1">Has three domains with a flexible linker between the domains II and III and assumes an 'L' shape. Domain III is highly mobile and contacts RuvB.</text>
</comment>
<comment type="similarity">
    <text evidence="1">Belongs to the RuvA family.</text>
</comment>
<proteinExistence type="inferred from homology"/>
<sequence length="188" mass="20888">MIAGISGRVLKKSGNVLLVETKSGVVFEIVCDVQTSEEVEEGGECFLHTFLSVSQDGITLYGFSNERKKELFLSLTKVSRLGPKTALKIISNEDAETLVTMIASQDVEGLSKLPGISKKTAERIVMELKDEFESAGIKDMRIYHESLEALISLGYPEKQAREAVKHVYREGMKTSELIKEALKFLSQR</sequence>
<evidence type="ECO:0000255" key="1">
    <source>
        <dbReference type="HAMAP-Rule" id="MF_00031"/>
    </source>
</evidence>
<reference key="1">
    <citation type="submission" date="2007-05" db="EMBL/GenBank/DDBJ databases">
        <title>Complete sequence of Thermotoga petrophila RKU-1.</title>
        <authorList>
            <consortium name="US DOE Joint Genome Institute"/>
            <person name="Copeland A."/>
            <person name="Lucas S."/>
            <person name="Lapidus A."/>
            <person name="Barry K."/>
            <person name="Glavina del Rio T."/>
            <person name="Dalin E."/>
            <person name="Tice H."/>
            <person name="Pitluck S."/>
            <person name="Sims D."/>
            <person name="Brettin T."/>
            <person name="Bruce D."/>
            <person name="Detter J.C."/>
            <person name="Han C."/>
            <person name="Tapia R."/>
            <person name="Schmutz J."/>
            <person name="Larimer F."/>
            <person name="Land M."/>
            <person name="Hauser L."/>
            <person name="Kyrpides N."/>
            <person name="Mikhailova N."/>
            <person name="Nelson K."/>
            <person name="Gogarten J.P."/>
            <person name="Noll K."/>
            <person name="Richardson P."/>
        </authorList>
    </citation>
    <scope>NUCLEOTIDE SEQUENCE [LARGE SCALE GENOMIC DNA]</scope>
    <source>
        <strain>ATCC BAA-488 / DSM 13995 / JCM 10881 / RKU-1</strain>
    </source>
</reference>
<keyword id="KW-0963">Cytoplasm</keyword>
<keyword id="KW-0227">DNA damage</keyword>
<keyword id="KW-0233">DNA recombination</keyword>
<keyword id="KW-0234">DNA repair</keyword>
<keyword id="KW-0238">DNA-binding</keyword>